<accession>Q6UG02</accession>
<comment type="function">
    <text>Catalyzes the oxidation of various aldopyranoses and disaccharides on carbon-2 to the corresponding 2-keto sugars concomitant with the reduction of O(2) to H(2)O(2). Plays an important role in lignin degradation of wood rot fungi by supplying the essential cosubstrate H(2)O(2) for the ligninolytic peroxidases, lignin peroxidase and manganese-dependent peroxidase. The preferred substrate is D-glucose which is converted to 2-dehydro-D-glucose, an intermediate of a secondary metabolic pathway leading to the antibiotic cortalcerone. Also acts on D-xylose, together with D-glucose the major sugars derived from wood, on L-sorbose, D-galactose and 1,5-anhydroglucitol, a diagnostic marker of diabetes mellitus.</text>
</comment>
<comment type="catalytic activity">
    <reaction>
        <text>D-glucose + O2 = 2-dehydro-D-glucose + H2O2</text>
        <dbReference type="Rhea" id="RHEA:10552"/>
        <dbReference type="ChEBI" id="CHEBI:4167"/>
        <dbReference type="ChEBI" id="CHEBI:15379"/>
        <dbReference type="ChEBI" id="CHEBI:16240"/>
        <dbReference type="ChEBI" id="CHEBI:16609"/>
        <dbReference type="EC" id="1.1.3.10"/>
    </reaction>
</comment>
<comment type="cofactor">
    <cofactor evidence="4">
        <name>FAD</name>
        <dbReference type="ChEBI" id="CHEBI:57692"/>
    </cofactor>
    <text evidence="4">Binds 1 FAD covalently per subunit.</text>
</comment>
<comment type="biophysicochemical properties">
    <kinetics>
        <KM evidence="3 4">0.65 mM for O(2)</KM>
        <KM evidence="3 4">1.1 mM for D-glucose</KM>
        <KM evidence="3 4">11.3 mM for 2-deoxy-D-glucose</KM>
        <KM evidence="3 4">289 mM for methyl-beta-D-glucoside</KM>
        <KM evidence="3 4">29.4 mM for D-xylose</KM>
        <KM evidence="3 4">50 mM for L-sorbose</KM>
        <KM evidence="3 4">8.2 mM for D-galactose</KM>
        <KM evidence="3 4">55.7 mM for D-allose</KM>
        <Vmax evidence="3 4">10.4 umol/min/mg enzyme with D-glucose as substrate</Vmax>
        <Vmax evidence="3 4">4.5 umol/min/mg enzyme with 2-deoxy-D-glucose as substrate</Vmax>
        <Vmax evidence="3 4">2.9 umol/min/mg enzyme with methyl-beta-D-glucoside as substrate</Vmax>
        <Vmax evidence="3 4">4.3 umol/min/mg enzyme with D-xylose as substrate</Vmax>
        <Vmax evidence="3 4">7.9 umol/min/mg enzyme with L-sorbose as substrate</Vmax>
        <Vmax evidence="3 4">0.5 umol/min/mg enzyme with D-galactose as substrate</Vmax>
        <Vmax evidence="3 4">3.7 umol/min/mg enzyme with D-allose as substrate</Vmax>
    </kinetics>
    <phDependence>
        <text evidence="3 4">Optimum pH is 4.5-6.0. Active from pH 4 to 7.5. Stable from pH 4 to 11.</text>
    </phDependence>
    <temperatureDependence>
        <text evidence="3 4">Optimum temperature is 44 degrees Celsius. Active from 30 to 55 degrees Celsius. Thermostable for 30 minutes up to 50 degrees Celsius.</text>
    </temperatureDependence>
</comment>
<comment type="subunit">
    <text>Homotetramer.</text>
</comment>
<comment type="subcellular location">
    <subcellularLocation>
        <location evidence="1">Periplasm</location>
    </subcellularLocation>
    <text evidence="1">Hyphal periplasmic space.</text>
</comment>
<comment type="PTM">
    <text>Not glycosylated.</text>
</comment>
<comment type="similarity">
    <text evidence="5">Belongs to the GMC oxidoreductase family.</text>
</comment>
<proteinExistence type="evidence at protein level"/>
<evidence type="ECO:0000250" key="1"/>
<evidence type="ECO:0000250" key="2">
    <source>
        <dbReference type="UniProtKB" id="E4QP00"/>
    </source>
</evidence>
<evidence type="ECO:0000269" key="3">
    <source>
    </source>
</evidence>
<evidence type="ECO:0000269" key="4">
    <source>
    </source>
</evidence>
<evidence type="ECO:0000305" key="5"/>
<name>P2OX_PHLGI</name>
<protein>
    <recommendedName>
        <fullName>Pyranose 2-oxidase</fullName>
        <shortName>P2Ox</shortName>
        <shortName>POD</shortName>
        <shortName>POx</shortName>
        <shortName>PROD</shortName>
        <shortName>Pyranose oxidase</shortName>
        <ecNumber>1.1.3.10</ecNumber>
    </recommendedName>
    <alternativeName>
        <fullName>FAD-oxidoreductase</fullName>
    </alternativeName>
    <alternativeName>
        <fullName>Glucose 2-oxidase</fullName>
    </alternativeName>
    <alternativeName>
        <fullName>Pyranose:oxygen 2-oxidoreductase</fullName>
    </alternativeName>
</protein>
<keyword id="KW-0903">Direct protein sequencing</keyword>
<keyword id="KW-0274">FAD</keyword>
<keyword id="KW-0285">Flavoprotein</keyword>
<keyword id="KW-0560">Oxidoreductase</keyword>
<keyword id="KW-0574">Periplasm</keyword>
<keyword id="KW-0732">Signal</keyword>
<dbReference type="EC" id="1.1.3.10"/>
<dbReference type="EMBL" id="AY370876">
    <property type="protein sequence ID" value="AAQ72486.1"/>
    <property type="molecule type" value="mRNA"/>
</dbReference>
<dbReference type="SMR" id="Q6UG02"/>
<dbReference type="CAZy" id="AA3">
    <property type="family name" value="Auxiliary Activities 3"/>
</dbReference>
<dbReference type="BRENDA" id="1.1.3.10">
    <property type="organism ID" value="4657"/>
</dbReference>
<dbReference type="SABIO-RK" id="Q6UG02"/>
<dbReference type="GO" id="GO:0042597">
    <property type="term" value="C:periplasmic space"/>
    <property type="evidence" value="ECO:0007669"/>
    <property type="project" value="UniProtKB-SubCell"/>
</dbReference>
<dbReference type="GO" id="GO:0050660">
    <property type="term" value="F:flavin adenine dinucleotide binding"/>
    <property type="evidence" value="ECO:0007669"/>
    <property type="project" value="InterPro"/>
</dbReference>
<dbReference type="GO" id="GO:0050233">
    <property type="term" value="F:pyranose oxidase activity"/>
    <property type="evidence" value="ECO:0007669"/>
    <property type="project" value="UniProtKB-EC"/>
</dbReference>
<dbReference type="Gene3D" id="3.30.1920.50">
    <property type="match status" value="1"/>
</dbReference>
<dbReference type="Gene3D" id="3.50.50.60">
    <property type="entry name" value="FAD/NAD(P)-binding domain"/>
    <property type="match status" value="2"/>
</dbReference>
<dbReference type="InterPro" id="IPR036188">
    <property type="entry name" value="FAD/NAD-bd_sf"/>
</dbReference>
<dbReference type="InterPro" id="IPR007867">
    <property type="entry name" value="GMC_OxRtase_C"/>
</dbReference>
<dbReference type="InterPro" id="IPR012814">
    <property type="entry name" value="P2OX"/>
</dbReference>
<dbReference type="InterPro" id="IPR051473">
    <property type="entry name" value="P2Ox-like"/>
</dbReference>
<dbReference type="NCBIfam" id="TIGR02462">
    <property type="entry name" value="pyranose_ox"/>
    <property type="match status" value="1"/>
</dbReference>
<dbReference type="PANTHER" id="PTHR42784">
    <property type="entry name" value="PYRANOSE 2-OXIDASE"/>
    <property type="match status" value="1"/>
</dbReference>
<dbReference type="PANTHER" id="PTHR42784:SF1">
    <property type="entry name" value="PYRANOSE 2-OXIDASE"/>
    <property type="match status" value="1"/>
</dbReference>
<dbReference type="Pfam" id="PF05199">
    <property type="entry name" value="GMC_oxred_C"/>
    <property type="match status" value="1"/>
</dbReference>
<dbReference type="SUPFAM" id="SSF54373">
    <property type="entry name" value="FAD-linked reductases, C-terminal domain"/>
    <property type="match status" value="1"/>
</dbReference>
<dbReference type="SUPFAM" id="SSF51905">
    <property type="entry name" value="FAD/NAD(P)-binding domain"/>
    <property type="match status" value="1"/>
</dbReference>
<organism>
    <name type="scientific">Phlebiopsis gigantea</name>
    <name type="common">White-rot fungus</name>
    <name type="synonym">Peniophora gigantea</name>
    <dbReference type="NCBI Taxonomy" id="82310"/>
    <lineage>
        <taxon>Eukaryota</taxon>
        <taxon>Fungi</taxon>
        <taxon>Dikarya</taxon>
        <taxon>Basidiomycota</taxon>
        <taxon>Agaricomycotina</taxon>
        <taxon>Agaricomycetes</taxon>
        <taxon>Polyporales</taxon>
        <taxon>Phanerochaetaceae</taxon>
        <taxon>Phlebiopsis</taxon>
    </lineage>
</organism>
<gene>
    <name type="primary">p2ox</name>
    <name type="synonym">poxB</name>
</gene>
<sequence length="622" mass="68902">MSASSSDPFHSFAKTSFTSKAAKRATAHSLPPLPGPGDLPPGMNVEYDVAIVGSGPIGSTYARELVEAGFNVAMFEIGEIDSGLKIGSHKKNTVEYQKNIDKFVNVIQGQLMPVSVPVNTMVVDTLSPASWQASTFFVRNGANPEQDPLRNLSGQAVTRVVGGMSTHWTCATPRFEKLQRPLLVKNDPVADDAEWDRLYKKAESYFKTGTTQFAESIRHNLVLKKLQEEYKGVRDFQQIPLAATRQSPTFVEWSSAHTVFDLENRPNKDAPKQRFNLFPAVACTSVRRNDANSEIIGLDVRDLHGGKSITIKAKVYILTAGAVHNAQLLAASGFGQLGRPDPAKPLPSLLPYLGTHITEQTLVFCQTVMSTELINSVTADMTIVGKPGDPDYSVTYTSGSPNNKHPDWWNEKVKKHMMDHQEDPLPIPFEDPEPQVTTLFKASHPWHTQIHRDAFSYGAVQQSIDSRLIVDWRFFGRTEPKEENKLWFSDKITDAYNLPQPTFDFRFPGGREAEDMMTDMCVMSAKIGGFLPGSYPQFMEPGLVLHLGGTHRMGFDEKADKCCVDTDSRVFGFKNLFLGGCGNIPTAYAANPTLTAMSLAIKSCEYIKKNFEPSPNPVKHHN</sequence>
<feature type="signal peptide" evidence="1">
    <location>
        <begin position="1"/>
        <end position="28"/>
    </location>
</feature>
<feature type="propeptide" id="PRO_0000012350" evidence="1">
    <location>
        <begin position="29"/>
        <end position="37"/>
    </location>
</feature>
<feature type="chain" id="PRO_0000012351" description="Pyranose 2-oxidase">
    <location>
        <begin position="38"/>
        <end position="622"/>
    </location>
</feature>
<feature type="active site" description="Proton acceptor" evidence="2">
    <location>
        <position position="546"/>
    </location>
</feature>
<feature type="active site" evidence="1">
    <location>
        <position position="591"/>
    </location>
</feature>
<feature type="binding site" evidence="1">
    <location>
        <position position="449"/>
    </location>
    <ligand>
        <name>substrate</name>
    </ligand>
</feature>
<feature type="binding site" evidence="1">
    <location>
        <position position="451"/>
    </location>
    <ligand>
        <name>substrate</name>
    </ligand>
</feature>
<feature type="modified residue" description="Tele-8alpha-FAD histidine" evidence="5">
    <location>
        <position position="167"/>
    </location>
</feature>
<feature type="mutagenesis site" description="Decreases activity by 90%." evidence="3">
    <original>H</original>
    <variation>C</variation>
    <location>
        <position position="167"/>
    </location>
</feature>
<feature type="mutagenesis site" description="In P2OxB2H; increases the catalytic efficiency 5.3-fold for D-glucose, 2-fold for methyl-beta-D-glucoside, 59.9-fold for D-xylose, 69-fold for L-sorbose and 4.8-fold for D-galactose; when associated with K-540." evidence="3">
    <original>K</original>
    <variation>E</variation>
    <location>
        <position position="312"/>
    </location>
</feature>
<feature type="mutagenesis site" description="In P2OxB1; increases thermostability up to 70 degrees Celsius and enhances pH stability in alkaline solution. Increases the catalytic efficiency 3.1-fold for D-xylose and 7.3-fold for L-sorbose, mainly by lowering the Km values for these two substrates to 6.6 mM and 5.4 mM, respectively. In P2OxB2H; increases the catalytic efficiency 5.3-fold for D-glucose, 2-fold for methyl-beta-D-glucoside, 59.9-fold for D-xylose, 69-fold for L-sorbose and 4.8-fold for D-galactose; when associated with K-312." evidence="3">
    <original>E</original>
    <variation>K</variation>
    <location>
        <position position="540"/>
    </location>
</feature>
<reference key="1">
    <citation type="journal article" date="2005" name="Appl. Microbiol. Biotechnol.">
        <title>Engineering of pyranose 2-oxidase from Peniophora gigantea towards improved thermostability and catalytic efficiency.</title>
        <authorList>
            <person name="Bastian S."/>
            <person name="Rekowski M.J."/>
            <person name="Witte K."/>
            <person name="Heckmann-Pohl D.M."/>
            <person name="Giffhorn F."/>
        </authorList>
    </citation>
    <scope>NUCLEOTIDE SEQUENCE [MRNA]</scope>
    <scope>PROTEIN SEQUENCE OF 29-52</scope>
    <scope>BIOPHYSICOCHEMICAL PROPERTIES</scope>
    <scope>MUTAGENESIS OF HIS-167; LYS-312 AND GLU-540</scope>
    <source>
        <strain>DSM 13218</strain>
    </source>
</reference>
<reference key="2">
    <citation type="journal article" date="1993" name="Eur. J. Biochem.">
        <title>Purification and characterization of a pyranose oxidase from the basidiomycete Peniophora gigantea and chemical analyses of its reaction products.</title>
        <authorList>
            <person name="Danneel H.-J."/>
            <person name="Roessner E."/>
            <person name="Zeeck A."/>
            <person name="Giffhorn F."/>
        </authorList>
    </citation>
    <scope>BIOPHYSICOCHEMICAL PROPERTIES</scope>
    <scope>TETRAMERIZATION</scope>
    <scope>FAD-BINDING</scope>
</reference>